<evidence type="ECO:0000255" key="1">
    <source>
        <dbReference type="PROSITE-ProRule" id="PRU00335"/>
    </source>
</evidence>
<sequence length="190" mass="21993">MDKRILAETFRLIKQKGFSFTMNDLAAALGTSKRTLYAYYSSKDQLVEAVVEQFIAEMKQIERDIYENESLNVLEKVKQMLISLPQGMELLNMGLLNELKKYHYDAWLTLDAFIKEEWAIVLALLNECKQQKRIRNINPDLFVHMYIGSINQVYDPEYPLKHQFTTGEVLESIVDVLFNGITADEEADAT</sequence>
<feature type="chain" id="PRO_0000360712" description="Uncharacterized HTH-type transcriptional regulator YvaF">
    <location>
        <begin position="1"/>
        <end position="190"/>
    </location>
</feature>
<feature type="domain" description="HTH tetR-type" evidence="1">
    <location>
        <begin position="1"/>
        <end position="58"/>
    </location>
</feature>
<feature type="DNA-binding region" description="H-T-H motif" evidence="1">
    <location>
        <begin position="21"/>
        <end position="40"/>
    </location>
</feature>
<gene>
    <name type="primary">yvaF</name>
    <name type="ordered locus">BSU33580</name>
</gene>
<name>YVAF_BACSU</name>
<keyword id="KW-0238">DNA-binding</keyword>
<keyword id="KW-1185">Reference proteome</keyword>
<keyword id="KW-0678">Repressor</keyword>
<keyword id="KW-0804">Transcription</keyword>
<keyword id="KW-0805">Transcription regulation</keyword>
<organism>
    <name type="scientific">Bacillus subtilis (strain 168)</name>
    <dbReference type="NCBI Taxonomy" id="224308"/>
    <lineage>
        <taxon>Bacteria</taxon>
        <taxon>Bacillati</taxon>
        <taxon>Bacillota</taxon>
        <taxon>Bacilli</taxon>
        <taxon>Bacillales</taxon>
        <taxon>Bacillaceae</taxon>
        <taxon>Bacillus</taxon>
    </lineage>
</organism>
<proteinExistence type="predicted"/>
<reference key="1">
    <citation type="journal article" date="1997" name="Nature">
        <title>The complete genome sequence of the Gram-positive bacterium Bacillus subtilis.</title>
        <authorList>
            <person name="Kunst F."/>
            <person name="Ogasawara N."/>
            <person name="Moszer I."/>
            <person name="Albertini A.M."/>
            <person name="Alloni G."/>
            <person name="Azevedo V."/>
            <person name="Bertero M.G."/>
            <person name="Bessieres P."/>
            <person name="Bolotin A."/>
            <person name="Borchert S."/>
            <person name="Borriss R."/>
            <person name="Boursier L."/>
            <person name="Brans A."/>
            <person name="Braun M."/>
            <person name="Brignell S.C."/>
            <person name="Bron S."/>
            <person name="Brouillet S."/>
            <person name="Bruschi C.V."/>
            <person name="Caldwell B."/>
            <person name="Capuano V."/>
            <person name="Carter N.M."/>
            <person name="Choi S.-K."/>
            <person name="Codani J.-J."/>
            <person name="Connerton I.F."/>
            <person name="Cummings N.J."/>
            <person name="Daniel R.A."/>
            <person name="Denizot F."/>
            <person name="Devine K.M."/>
            <person name="Duesterhoeft A."/>
            <person name="Ehrlich S.D."/>
            <person name="Emmerson P.T."/>
            <person name="Entian K.-D."/>
            <person name="Errington J."/>
            <person name="Fabret C."/>
            <person name="Ferrari E."/>
            <person name="Foulger D."/>
            <person name="Fritz C."/>
            <person name="Fujita M."/>
            <person name="Fujita Y."/>
            <person name="Fuma S."/>
            <person name="Galizzi A."/>
            <person name="Galleron N."/>
            <person name="Ghim S.-Y."/>
            <person name="Glaser P."/>
            <person name="Goffeau A."/>
            <person name="Golightly E.J."/>
            <person name="Grandi G."/>
            <person name="Guiseppi G."/>
            <person name="Guy B.J."/>
            <person name="Haga K."/>
            <person name="Haiech J."/>
            <person name="Harwood C.R."/>
            <person name="Henaut A."/>
            <person name="Hilbert H."/>
            <person name="Holsappel S."/>
            <person name="Hosono S."/>
            <person name="Hullo M.-F."/>
            <person name="Itaya M."/>
            <person name="Jones L.-M."/>
            <person name="Joris B."/>
            <person name="Karamata D."/>
            <person name="Kasahara Y."/>
            <person name="Klaerr-Blanchard M."/>
            <person name="Klein C."/>
            <person name="Kobayashi Y."/>
            <person name="Koetter P."/>
            <person name="Koningstein G."/>
            <person name="Krogh S."/>
            <person name="Kumano M."/>
            <person name="Kurita K."/>
            <person name="Lapidus A."/>
            <person name="Lardinois S."/>
            <person name="Lauber J."/>
            <person name="Lazarevic V."/>
            <person name="Lee S.-M."/>
            <person name="Levine A."/>
            <person name="Liu H."/>
            <person name="Masuda S."/>
            <person name="Mauel C."/>
            <person name="Medigue C."/>
            <person name="Medina N."/>
            <person name="Mellado R.P."/>
            <person name="Mizuno M."/>
            <person name="Moestl D."/>
            <person name="Nakai S."/>
            <person name="Noback M."/>
            <person name="Noone D."/>
            <person name="O'Reilly M."/>
            <person name="Ogawa K."/>
            <person name="Ogiwara A."/>
            <person name="Oudega B."/>
            <person name="Park S.-H."/>
            <person name="Parro V."/>
            <person name="Pohl T.M."/>
            <person name="Portetelle D."/>
            <person name="Porwollik S."/>
            <person name="Prescott A.M."/>
            <person name="Presecan E."/>
            <person name="Pujic P."/>
            <person name="Purnelle B."/>
            <person name="Rapoport G."/>
            <person name="Rey M."/>
            <person name="Reynolds S."/>
            <person name="Rieger M."/>
            <person name="Rivolta C."/>
            <person name="Rocha E."/>
            <person name="Roche B."/>
            <person name="Rose M."/>
            <person name="Sadaie Y."/>
            <person name="Sato T."/>
            <person name="Scanlan E."/>
            <person name="Schleich S."/>
            <person name="Schroeter R."/>
            <person name="Scoffone F."/>
            <person name="Sekiguchi J."/>
            <person name="Sekowska A."/>
            <person name="Seror S.J."/>
            <person name="Serror P."/>
            <person name="Shin B.-S."/>
            <person name="Soldo B."/>
            <person name="Sorokin A."/>
            <person name="Tacconi E."/>
            <person name="Takagi T."/>
            <person name="Takahashi H."/>
            <person name="Takemaru K."/>
            <person name="Takeuchi M."/>
            <person name="Tamakoshi A."/>
            <person name="Tanaka T."/>
            <person name="Terpstra P."/>
            <person name="Tognoni A."/>
            <person name="Tosato V."/>
            <person name="Uchiyama S."/>
            <person name="Vandenbol M."/>
            <person name="Vannier F."/>
            <person name="Vassarotti A."/>
            <person name="Viari A."/>
            <person name="Wambutt R."/>
            <person name="Wedler E."/>
            <person name="Wedler H."/>
            <person name="Weitzenegger T."/>
            <person name="Winters P."/>
            <person name="Wipat A."/>
            <person name="Yamamoto H."/>
            <person name="Yamane K."/>
            <person name="Yasumoto K."/>
            <person name="Yata K."/>
            <person name="Yoshida K."/>
            <person name="Yoshikawa H.-F."/>
            <person name="Zumstein E."/>
            <person name="Yoshikawa H."/>
            <person name="Danchin A."/>
        </authorList>
    </citation>
    <scope>NUCLEOTIDE SEQUENCE [LARGE SCALE GENOMIC DNA]</scope>
    <source>
        <strain>168</strain>
    </source>
</reference>
<reference key="2">
    <citation type="journal article" date="2005" name="Microbiol. Mol. Biol. Rev.">
        <title>The TetR family of transcriptional repressors.</title>
        <authorList>
            <person name="Ramos J.L."/>
            <person name="Martinez-Bueno M."/>
            <person name="Molina-Henares A.J."/>
            <person name="Teran W."/>
            <person name="Watanabe K."/>
            <person name="Zhang X."/>
            <person name="Gallegos M.T."/>
            <person name="Brennan R."/>
            <person name="Tobes R."/>
        </authorList>
    </citation>
    <scope>REVIEW</scope>
    <scope>GENE FAMILY</scope>
</reference>
<protein>
    <recommendedName>
        <fullName>Uncharacterized HTH-type transcriptional regulator YvaF</fullName>
    </recommendedName>
</protein>
<dbReference type="EMBL" id="AL009126">
    <property type="protein sequence ID" value="CAB15363.1"/>
    <property type="molecule type" value="Genomic_DNA"/>
</dbReference>
<dbReference type="PIR" id="D70027">
    <property type="entry name" value="D70027"/>
</dbReference>
<dbReference type="RefSeq" id="NP_391238.1">
    <property type="nucleotide sequence ID" value="NC_000964.3"/>
</dbReference>
<dbReference type="RefSeq" id="WP_003243160.1">
    <property type="nucleotide sequence ID" value="NZ_OZ025638.1"/>
</dbReference>
<dbReference type="SMR" id="O32228"/>
<dbReference type="FunCoup" id="O32228">
    <property type="interactions" value="9"/>
</dbReference>
<dbReference type="STRING" id="224308.BSU33580"/>
<dbReference type="PaxDb" id="224308-BSU33580"/>
<dbReference type="EnsemblBacteria" id="CAB15363">
    <property type="protein sequence ID" value="CAB15363"/>
    <property type="gene ID" value="BSU_33580"/>
</dbReference>
<dbReference type="GeneID" id="936128"/>
<dbReference type="KEGG" id="bsu:BSU33580"/>
<dbReference type="PATRIC" id="fig|224308.179.peg.3643"/>
<dbReference type="eggNOG" id="COG1309">
    <property type="taxonomic scope" value="Bacteria"/>
</dbReference>
<dbReference type="InParanoid" id="O32228"/>
<dbReference type="OrthoDB" id="9812134at2"/>
<dbReference type="BioCyc" id="BSUB:BSU33580-MONOMER"/>
<dbReference type="Proteomes" id="UP000001570">
    <property type="component" value="Chromosome"/>
</dbReference>
<dbReference type="GO" id="GO:0003700">
    <property type="term" value="F:DNA-binding transcription factor activity"/>
    <property type="evidence" value="ECO:0000318"/>
    <property type="project" value="GO_Central"/>
</dbReference>
<dbReference type="GO" id="GO:0000976">
    <property type="term" value="F:transcription cis-regulatory region binding"/>
    <property type="evidence" value="ECO:0000318"/>
    <property type="project" value="GO_Central"/>
</dbReference>
<dbReference type="GO" id="GO:0006355">
    <property type="term" value="P:regulation of DNA-templated transcription"/>
    <property type="evidence" value="ECO:0000318"/>
    <property type="project" value="GO_Central"/>
</dbReference>
<dbReference type="Gene3D" id="1.10.10.60">
    <property type="entry name" value="Homeodomain-like"/>
    <property type="match status" value="1"/>
</dbReference>
<dbReference type="Gene3D" id="1.10.357.10">
    <property type="entry name" value="Tetracycline Repressor, domain 2"/>
    <property type="match status" value="1"/>
</dbReference>
<dbReference type="InterPro" id="IPR009057">
    <property type="entry name" value="Homeodomain-like_sf"/>
</dbReference>
<dbReference type="InterPro" id="IPR050109">
    <property type="entry name" value="HTH-type_TetR-like_transc_reg"/>
</dbReference>
<dbReference type="InterPro" id="IPR001647">
    <property type="entry name" value="HTH_TetR"/>
</dbReference>
<dbReference type="InterPro" id="IPR036271">
    <property type="entry name" value="Tet_transcr_reg_TetR-rel_C_sf"/>
</dbReference>
<dbReference type="PANTHER" id="PTHR30055">
    <property type="entry name" value="HTH-TYPE TRANSCRIPTIONAL REGULATOR RUTR"/>
    <property type="match status" value="1"/>
</dbReference>
<dbReference type="PANTHER" id="PTHR30055:SF175">
    <property type="entry name" value="HTH-TYPE TRANSCRIPTIONAL REPRESSOR KSTR2"/>
    <property type="match status" value="1"/>
</dbReference>
<dbReference type="Pfam" id="PF00440">
    <property type="entry name" value="TetR_N"/>
    <property type="match status" value="1"/>
</dbReference>
<dbReference type="PRINTS" id="PR00455">
    <property type="entry name" value="HTHTETR"/>
</dbReference>
<dbReference type="SUPFAM" id="SSF46689">
    <property type="entry name" value="Homeodomain-like"/>
    <property type="match status" value="1"/>
</dbReference>
<dbReference type="SUPFAM" id="SSF48498">
    <property type="entry name" value="Tetracyclin repressor-like, C-terminal domain"/>
    <property type="match status" value="1"/>
</dbReference>
<dbReference type="PROSITE" id="PS50977">
    <property type="entry name" value="HTH_TETR_2"/>
    <property type="match status" value="1"/>
</dbReference>
<accession>O32228</accession>